<dbReference type="EMBL" id="AEMK02000012">
    <property type="status" value="NOT_ANNOTATED_CDS"/>
    <property type="molecule type" value="Genomic_DNA"/>
</dbReference>
<dbReference type="PDB" id="6ZNL">
    <property type="method" value="EM"/>
    <property type="resolution" value="3.80 A"/>
    <property type="chains" value="Y=1-467"/>
</dbReference>
<dbReference type="PDB" id="6ZNM">
    <property type="method" value="EM"/>
    <property type="resolution" value="4.10 A"/>
    <property type="chains" value="Y=1-467"/>
</dbReference>
<dbReference type="PDB" id="6ZNN">
    <property type="method" value="EM"/>
    <property type="resolution" value="4.50 A"/>
    <property type="chains" value="Y=1-467"/>
</dbReference>
<dbReference type="PDB" id="6ZNO">
    <property type="method" value="EM"/>
    <property type="resolution" value="6.80 A"/>
    <property type="chains" value="Y=1-467"/>
</dbReference>
<dbReference type="PDB" id="6ZO4">
    <property type="method" value="EM"/>
    <property type="resolution" value="8.20 A"/>
    <property type="chains" value="Y=1-467"/>
</dbReference>
<dbReference type="PDB" id="7Z8F">
    <property type="method" value="EM"/>
    <property type="resolution" value="20.00 A"/>
    <property type="chains" value="Y=1-467"/>
</dbReference>
<dbReference type="PDB" id="7Z8M">
    <property type="method" value="EM"/>
    <property type="resolution" value="3.37 A"/>
    <property type="chains" value="Y=1-467"/>
</dbReference>
<dbReference type="PDB" id="8PR4">
    <property type="method" value="EM"/>
    <property type="resolution" value="3.50 A"/>
    <property type="chains" value="Y=1-467"/>
</dbReference>
<dbReference type="PDB" id="8PTK">
    <property type="method" value="EM"/>
    <property type="resolution" value="10.00 A"/>
    <property type="chains" value="Y=1-467"/>
</dbReference>
<dbReference type="PDBsum" id="6ZNL"/>
<dbReference type="PDBsum" id="6ZNM"/>
<dbReference type="PDBsum" id="6ZNN"/>
<dbReference type="PDBsum" id="6ZNO"/>
<dbReference type="PDBsum" id="6ZO4"/>
<dbReference type="PDBsum" id="7Z8F"/>
<dbReference type="PDBsum" id="7Z8M"/>
<dbReference type="PDBsum" id="8PR4"/>
<dbReference type="PDBsum" id="8PTK"/>
<dbReference type="EMDB" id="EMD-11313"/>
<dbReference type="EMDB" id="EMD-11317"/>
<dbReference type="EMDB" id="EMD-11318"/>
<dbReference type="EMDB" id="EMD-11319"/>
<dbReference type="EMDB" id="EMD-14549"/>
<dbReference type="EMDB" id="EMD-14559"/>
<dbReference type="EMDB" id="EMD-17834"/>
<dbReference type="EMDB" id="EMD-17873"/>
<dbReference type="SMR" id="A0A4X1TB62"/>
<dbReference type="Ensembl" id="ENSSSCT00000101922.1">
    <property type="protein sequence ID" value="ENSSSCP00000079570.1"/>
    <property type="gene ID" value="ENSSSCG00000021427.4"/>
</dbReference>
<dbReference type="Ensembl" id="ENSSSCT00015001069.1">
    <property type="protein sequence ID" value="ENSSSCP00015000258.1"/>
    <property type="gene ID" value="ENSSSCG00015000854.1"/>
</dbReference>
<dbReference type="Ensembl" id="ENSSSCT00070015236.1">
    <property type="protein sequence ID" value="ENSSSCP00070012596.1"/>
    <property type="gene ID" value="ENSSSCG00070007847.1"/>
</dbReference>
<dbReference type="Ensembl" id="ENSSSCT00090045633">
    <property type="protein sequence ID" value="ENSSSCP00090028338"/>
    <property type="gene ID" value="ENSSSCG00090025808"/>
</dbReference>
<dbReference type="Ensembl" id="ENSSSCT00105043645">
    <property type="protein sequence ID" value="ENSSSCP00105030426"/>
    <property type="gene ID" value="ENSSSCG00105022845"/>
</dbReference>
<dbReference type="Ensembl" id="ENSSSCT00130041152">
    <property type="protein sequence ID" value="ENSSSCP00130017387"/>
    <property type="gene ID" value="ENSSSCG00130021223"/>
</dbReference>
<dbReference type="VGNC" id="VGNC:99635">
    <property type="gene designation" value="DCTN4"/>
</dbReference>
<dbReference type="OMA" id="KIYFCRH"/>
<dbReference type="Reactome" id="R-SSC-2132295">
    <property type="pathway name" value="MHC class II antigen presentation"/>
</dbReference>
<dbReference type="Reactome" id="R-SSC-3371497">
    <property type="pathway name" value="HSP90 chaperone cycle for steroid hormone receptors (SHR) in the presence of ligand"/>
</dbReference>
<dbReference type="Reactome" id="R-SSC-6807878">
    <property type="pathway name" value="COPI-mediated anterograde transport"/>
</dbReference>
<dbReference type="Proteomes" id="UP000008227">
    <property type="component" value="Chromosome 2"/>
</dbReference>
<dbReference type="Proteomes" id="UP000314985">
    <property type="component" value="Chromosome 2"/>
</dbReference>
<dbReference type="Proteomes" id="UP000694570">
    <property type="component" value="Unplaced"/>
</dbReference>
<dbReference type="Proteomes" id="UP000694571">
    <property type="component" value="Unplaced"/>
</dbReference>
<dbReference type="Proteomes" id="UP000694720">
    <property type="component" value="Unplaced"/>
</dbReference>
<dbReference type="Proteomes" id="UP000694722">
    <property type="component" value="Unplaced"/>
</dbReference>
<dbReference type="Proteomes" id="UP000694723">
    <property type="component" value="Unplaced"/>
</dbReference>
<dbReference type="Proteomes" id="UP000694724">
    <property type="component" value="Unplaced"/>
</dbReference>
<dbReference type="Proteomes" id="UP000694725">
    <property type="component" value="Unplaced"/>
</dbReference>
<dbReference type="Proteomes" id="UP000694726">
    <property type="component" value="Unplaced"/>
</dbReference>
<dbReference type="Proteomes" id="UP000694727">
    <property type="component" value="Unplaced"/>
</dbReference>
<dbReference type="Proteomes" id="UP000694728">
    <property type="component" value="Unplaced"/>
</dbReference>
<dbReference type="GO" id="GO:0005938">
    <property type="term" value="C:cell cortex"/>
    <property type="evidence" value="ECO:0007669"/>
    <property type="project" value="UniProtKB-SubCell"/>
</dbReference>
<dbReference type="GO" id="GO:0005813">
    <property type="term" value="C:centrosome"/>
    <property type="evidence" value="ECO:0007669"/>
    <property type="project" value="UniProtKB-SubCell"/>
</dbReference>
<dbReference type="GO" id="GO:0005869">
    <property type="term" value="C:dynactin complex"/>
    <property type="evidence" value="ECO:0000318"/>
    <property type="project" value="GO_Central"/>
</dbReference>
<dbReference type="GO" id="GO:0030017">
    <property type="term" value="C:sarcomere"/>
    <property type="evidence" value="ECO:0007669"/>
    <property type="project" value="UniProtKB-SubCell"/>
</dbReference>
<dbReference type="GO" id="GO:0001725">
    <property type="term" value="C:stress fiber"/>
    <property type="evidence" value="ECO:0007669"/>
    <property type="project" value="UniProtKB-SubCell"/>
</dbReference>
<dbReference type="InterPro" id="IPR008603">
    <property type="entry name" value="DCTN4"/>
</dbReference>
<dbReference type="PANTHER" id="PTHR13034">
    <property type="entry name" value="DYNACTIN P62 SUBUNIT"/>
    <property type="match status" value="1"/>
</dbReference>
<dbReference type="PANTHER" id="PTHR13034:SF2">
    <property type="entry name" value="DYNACTIN SUBUNIT 4"/>
    <property type="match status" value="1"/>
</dbReference>
<dbReference type="Pfam" id="PF05502">
    <property type="entry name" value="Dynactin_p62"/>
    <property type="match status" value="2"/>
</dbReference>
<evidence type="ECO:0000250" key="1">
    <source>
        <dbReference type="UniProtKB" id="O75935"/>
    </source>
</evidence>
<evidence type="ECO:0000250" key="2">
    <source>
        <dbReference type="UniProtKB" id="Q8CBY8"/>
    </source>
</evidence>
<evidence type="ECO:0000250" key="3">
    <source>
        <dbReference type="UniProtKB" id="Q9QUR2"/>
    </source>
</evidence>
<evidence type="ECO:0000250" key="4">
    <source>
        <dbReference type="UniProtKB" id="Q9UJW0"/>
    </source>
</evidence>
<evidence type="ECO:0000269" key="5">
    <source>
    </source>
</evidence>
<evidence type="ECO:0000269" key="6">
    <source>
    </source>
</evidence>
<evidence type="ECO:0000305" key="7"/>
<evidence type="ECO:0000305" key="8">
    <source>
    </source>
</evidence>
<evidence type="ECO:0000312" key="9">
    <source>
        <dbReference type="Proteomes" id="UP000314985"/>
    </source>
</evidence>
<evidence type="ECO:0007744" key="10">
    <source>
        <dbReference type="PDB" id="6ZNL"/>
    </source>
</evidence>
<evidence type="ECO:0007744" key="11">
    <source>
        <dbReference type="PDB" id="6ZNM"/>
    </source>
</evidence>
<evidence type="ECO:0007744" key="12">
    <source>
        <dbReference type="PDB" id="6ZNN"/>
    </source>
</evidence>
<evidence type="ECO:0007744" key="13">
    <source>
        <dbReference type="PDB" id="6ZNO"/>
    </source>
</evidence>
<evidence type="ECO:0007744" key="14">
    <source>
        <dbReference type="PDB" id="6ZO4"/>
    </source>
</evidence>
<evidence type="ECO:0007744" key="15">
    <source>
        <dbReference type="PDB" id="7Z8F"/>
    </source>
</evidence>
<evidence type="ECO:0007744" key="16">
    <source>
        <dbReference type="PDB" id="7Z8M"/>
    </source>
</evidence>
<evidence type="ECO:0007829" key="17">
    <source>
        <dbReference type="PDB" id="7Z8M"/>
    </source>
</evidence>
<evidence type="ECO:0007829" key="18">
    <source>
        <dbReference type="PDB" id="8PR4"/>
    </source>
</evidence>
<organism evidence="9">
    <name type="scientific">Sus scrofa</name>
    <name type="common">Pig</name>
    <dbReference type="NCBI Taxonomy" id="9823"/>
    <lineage>
        <taxon>Eukaryota</taxon>
        <taxon>Metazoa</taxon>
        <taxon>Chordata</taxon>
        <taxon>Craniata</taxon>
        <taxon>Vertebrata</taxon>
        <taxon>Euteleostomi</taxon>
        <taxon>Mammalia</taxon>
        <taxon>Eutheria</taxon>
        <taxon>Laurasiatheria</taxon>
        <taxon>Artiodactyla</taxon>
        <taxon>Suina</taxon>
        <taxon>Suidae</taxon>
        <taxon>Sus</taxon>
    </lineage>
</organism>
<gene>
    <name type="primary">DCTN4</name>
</gene>
<reference key="1">
    <citation type="submission" date="2009-11" db="EMBL/GenBank/DDBJ databases">
        <authorList>
            <consortium name="Porcine genome sequencing project"/>
        </authorList>
    </citation>
    <scope>NUCLEOTIDE SEQUENCE [LARGE SCALE GENOMIC DNA]</scope>
    <source>
        <strain>Duroc</strain>
    </source>
</reference>
<reference evidence="9" key="2">
    <citation type="submission" date="2017-08" db="EMBL/GenBank/DDBJ databases">
        <title>USMARCv1.0.</title>
        <authorList>
            <person name="Hannum G.I."/>
            <person name="Koren S."/>
            <person name="Schroeder S.G."/>
            <person name="Chin S.C."/>
            <person name="Nonneman D.J."/>
            <person name="Becker S.A."/>
            <person name="Rosen B.D."/>
            <person name="Bickhart D.M."/>
            <person name="Putnam N.H."/>
            <person name="Green R.E."/>
            <person name="Tuggle C.K."/>
            <person name="Liu H."/>
            <person name="Rohrer G.A."/>
            <person name="Warr A."/>
            <person name="Hall R."/>
            <person name="Kim K."/>
            <person name="Hume D.A."/>
            <person name="Talbot R."/>
            <person name="Chow W."/>
            <person name="Howe K."/>
            <person name="Schwartz A.S."/>
            <person name="Watson M."/>
            <person name="Archibald A.L."/>
            <person name="Phillippy A.M."/>
            <person name="Smith T.P.L."/>
        </authorList>
    </citation>
    <scope>NUCLEOTIDE SEQUENCE [LARGE SCALE GENOMIC DNA]</scope>
</reference>
<reference evidence="10 11 12 13 14" key="3">
    <citation type="journal article" date="2021" name="EMBO J.">
        <title>Cryo-EM reveals the complex architecture of dynactin's shoulder region and pointed end.</title>
        <authorList>
            <person name="Lau C.K."/>
            <person name="O'Reilly F.J."/>
            <person name="Santhanam B."/>
            <person name="Lacey S.E."/>
            <person name="Rappsilber J."/>
            <person name="Carter A.P."/>
        </authorList>
    </citation>
    <scope>STRUCTURE BY ELECTRON MICROSCOPY (3.80 ANGSTROMS)</scope>
    <scope>SUBUNIT</scope>
    <scope>FUNCTION</scope>
</reference>
<reference evidence="15 16" key="4">
    <citation type="journal article" date="2022" name="Nature">
        <title>Structure of dynein-dynactin on microtubules shows tandem adaptor binding.</title>
        <authorList>
            <person name="Chaaban S."/>
            <person name="Carter A.P."/>
        </authorList>
    </citation>
    <scope>STRUCTURE BY ELECTRON MICROSCOPY (3.37 ANGSTROMS)</scope>
    <scope>SUBUNIT</scope>
    <scope>FUNCTION</scope>
</reference>
<accession>A0A4X1TB62</accession>
<feature type="initiator methionine" description="Removed" evidence="4">
    <location>
        <position position="1"/>
    </location>
</feature>
<feature type="chain" id="PRO_0000457464" description="Dynactin subunit 4" evidence="4">
    <location>
        <begin position="2"/>
        <end position="467"/>
    </location>
</feature>
<feature type="modified residue" description="N-acetylalanine" evidence="4">
    <location>
        <position position="2"/>
    </location>
</feature>
<feature type="modified residue" description="Phosphothreonine" evidence="3">
    <location>
        <position position="414"/>
    </location>
</feature>
<feature type="cross-link" description="Glycyl lysine isopeptide (Lys-Gly) (interchain with G-Cter in SUMO2)" evidence="4">
    <location>
        <position position="222"/>
    </location>
</feature>
<feature type="turn" evidence="17">
    <location>
        <begin position="3"/>
        <end position="6"/>
    </location>
</feature>
<feature type="helix" evidence="17">
    <location>
        <begin position="7"/>
        <end position="9"/>
    </location>
</feature>
<feature type="strand" evidence="17">
    <location>
        <begin position="10"/>
        <end position="14"/>
    </location>
</feature>
<feature type="strand" evidence="17">
    <location>
        <begin position="16"/>
        <end position="18"/>
    </location>
</feature>
<feature type="strand" evidence="17">
    <location>
        <begin position="20"/>
        <end position="22"/>
    </location>
</feature>
<feature type="helix" evidence="17">
    <location>
        <begin position="24"/>
        <end position="26"/>
    </location>
</feature>
<feature type="strand" evidence="18">
    <location>
        <begin position="27"/>
        <end position="30"/>
    </location>
</feature>
<feature type="strand" evidence="17">
    <location>
        <begin position="31"/>
        <end position="35"/>
    </location>
</feature>
<feature type="turn" evidence="17">
    <location>
        <begin position="39"/>
        <end position="41"/>
    </location>
</feature>
<feature type="strand" evidence="17">
    <location>
        <begin position="42"/>
        <end position="50"/>
    </location>
</feature>
<feature type="strand" evidence="17">
    <location>
        <begin position="52"/>
        <end position="54"/>
    </location>
</feature>
<feature type="helix" evidence="17">
    <location>
        <begin position="60"/>
        <end position="65"/>
    </location>
</feature>
<feature type="strand" evidence="17">
    <location>
        <begin position="68"/>
        <end position="75"/>
    </location>
</feature>
<feature type="strand" evidence="17">
    <location>
        <begin position="77"/>
        <end position="80"/>
    </location>
</feature>
<feature type="strand" evidence="17">
    <location>
        <begin position="82"/>
        <end position="87"/>
    </location>
</feature>
<feature type="strand" evidence="17">
    <location>
        <begin position="107"/>
        <end position="110"/>
    </location>
</feature>
<feature type="strand" evidence="17">
    <location>
        <begin position="112"/>
        <end position="114"/>
    </location>
</feature>
<feature type="helix" evidence="17">
    <location>
        <begin position="118"/>
        <end position="121"/>
    </location>
</feature>
<feature type="strand" evidence="17">
    <location>
        <begin position="126"/>
        <end position="130"/>
    </location>
</feature>
<feature type="helix" evidence="17">
    <location>
        <begin position="141"/>
        <end position="170"/>
    </location>
</feature>
<feature type="strand" evidence="17">
    <location>
        <begin position="229"/>
        <end position="231"/>
    </location>
</feature>
<feature type="helix" evidence="17">
    <location>
        <begin position="237"/>
        <end position="239"/>
    </location>
</feature>
<feature type="turn" evidence="17">
    <location>
        <begin position="246"/>
        <end position="248"/>
    </location>
</feature>
<feature type="helix" evidence="17">
    <location>
        <begin position="252"/>
        <end position="256"/>
    </location>
</feature>
<feature type="helix" evidence="17">
    <location>
        <begin position="259"/>
        <end position="261"/>
    </location>
</feature>
<feature type="helix" evidence="17">
    <location>
        <begin position="266"/>
        <end position="268"/>
    </location>
</feature>
<feature type="strand" evidence="17">
    <location>
        <begin position="272"/>
        <end position="275"/>
    </location>
</feature>
<feature type="strand" evidence="17">
    <location>
        <begin position="277"/>
        <end position="283"/>
    </location>
</feature>
<feature type="strand" evidence="17">
    <location>
        <begin position="285"/>
        <end position="287"/>
    </location>
</feature>
<feature type="strand" evidence="17">
    <location>
        <begin position="290"/>
        <end position="294"/>
    </location>
</feature>
<feature type="strand" evidence="18">
    <location>
        <begin position="296"/>
        <end position="299"/>
    </location>
</feature>
<feature type="strand" evidence="17">
    <location>
        <begin position="303"/>
        <end position="306"/>
    </location>
</feature>
<feature type="helix" evidence="17">
    <location>
        <begin position="309"/>
        <end position="311"/>
    </location>
</feature>
<feature type="strand" evidence="17">
    <location>
        <begin position="315"/>
        <end position="318"/>
    </location>
</feature>
<feature type="strand" evidence="17">
    <location>
        <begin position="330"/>
        <end position="335"/>
    </location>
</feature>
<feature type="strand" evidence="17">
    <location>
        <begin position="338"/>
        <end position="344"/>
    </location>
</feature>
<feature type="turn" evidence="17">
    <location>
        <begin position="350"/>
        <end position="352"/>
    </location>
</feature>
<feature type="strand" evidence="17">
    <location>
        <begin position="370"/>
        <end position="373"/>
    </location>
</feature>
<feature type="helix" evidence="17">
    <location>
        <begin position="387"/>
        <end position="391"/>
    </location>
</feature>
<feature type="turn" evidence="17">
    <location>
        <begin position="396"/>
        <end position="398"/>
    </location>
</feature>
<feature type="strand" evidence="18">
    <location>
        <begin position="399"/>
        <end position="403"/>
    </location>
</feature>
<feature type="strand" evidence="17">
    <location>
        <begin position="408"/>
        <end position="411"/>
    </location>
</feature>
<feature type="strand" evidence="17">
    <location>
        <begin position="417"/>
        <end position="420"/>
    </location>
</feature>
<feature type="strand" evidence="17">
    <location>
        <begin position="423"/>
        <end position="431"/>
    </location>
</feature>
<feature type="helix" evidence="17">
    <location>
        <begin position="447"/>
        <end position="451"/>
    </location>
</feature>
<feature type="strand" evidence="17">
    <location>
        <begin position="453"/>
        <end position="461"/>
    </location>
</feature>
<protein>
    <recommendedName>
        <fullName>Dynactin subunit 4</fullName>
        <shortName>Dyn4</shortName>
    </recommendedName>
</protein>
<name>DCTN4_PIG</name>
<proteinExistence type="evidence at protein level"/>
<comment type="function">
    <text evidence="1 5 6">Part of the dynactin complex that activates the molecular motor dynein for ultra-processive transport along microtubules (PubMed:33734450, PubMed:36071160). Together with dynein is involved in spindle assembly and cytokinesis (By similarity).</text>
</comment>
<comment type="subunit">
    <text evidence="2 4 5 6">Subunit of dynactin, a multiprotein complex part of a tripartite complex with dynein and a adapter, such as BICDL1, BICD2 or HOOK3 (PubMed:33734450, PubMed:36071160). The dynactin complex is built around ACTR1A/ACTB filament and consists of an actin-related filament composed of a shoulder domain, a pointed end and a barbed end. Its length is defined by its flexible shoulder domain. The soulder is composed of 2 DCTN1 subunits, 4 DCTN2 and 2 DCTN3. The 4 DCNT2 (via N-terminus) bind the ACTR1A filament and act as molecular rulers to determine the length. The pointed end is important for binding dynein-dynactin cargo adapters. Consists of 4 subunits: ACTR10, DCNT4, DCTN5 and DCTN6 (PubMed:33734450). The barbed end is composed of a CAPZA1:CAPZB heterodimers, which binds ACTR1A/ACTB filament and dynactin and stabilizes dynactin (PubMed:33734450, PubMed:36071160). Interacts with ATP7B, but not ATP7A, in a copper-dependent manner (By similarity). Interacts with ANK2; this interaction is required for localization at costameres (By similarity). Interacts with N4BP2L1 (By similarity).</text>
</comment>
<comment type="subcellular location">
    <subcellularLocation>
        <location evidence="8">Cytoplasm</location>
        <location evidence="8">Cytoskeleton</location>
    </subcellularLocation>
    <subcellularLocation>
        <location evidence="4">Cytoplasm</location>
        <location evidence="4">Cytoskeleton</location>
        <location evidence="4">Microtubule organizing center</location>
        <location evidence="4">Centrosome</location>
    </subcellularLocation>
    <subcellularLocation>
        <location evidence="3">Cytoplasm</location>
        <location evidence="3">Cytoskeleton</location>
        <location evidence="3">Stress fiber</location>
    </subcellularLocation>
    <subcellularLocation>
        <location evidence="3">Cytoplasm</location>
        <location evidence="3">Cell cortex</location>
    </subcellularLocation>
    <subcellularLocation>
        <location evidence="2">Cytoplasm</location>
        <location evidence="2">Myofibril</location>
        <location evidence="2">Sarcomere</location>
    </subcellularLocation>
    <text evidence="2 3 4">Has a punctate cytoplasmic distribution as well as centrosomal distribution typical of dynactin (By similarity). Overexpression in cultured mammalian cells revealed colocalization with cortical actin, stress fibers, and focal adhesion sites, sites of potential interaction between microtubules and the cell cortex (By similarity). In skeletal muscles, costamere localization requires the presence of ANK2 (By similarity).</text>
</comment>
<comment type="similarity">
    <text evidence="7">Belongs to the dynactin subunit 4 family.</text>
</comment>
<sequence>MASLLQSERVLYLVQGEKKVRAPLSQLYFCRYCSELRSLECVSHEVDSHYCPSCLENMPSAEAKLKKNRCANCFDCPGCMHTLSTRATSISTQLPDDPAKTAVKKAYYLACGFCRWTSRDVGMADKSVASGGWQEPDHPHTQRMNKLIEYYQQLAQKEKVERDRKKLARRRNYMPLAFSQHTIHVVDKYGLGTRLQRPRAGTTITALAGLSLKEGEDQKEIKIEPAQAVDEVEPLPEDYYTRPVNLTEVTTLQQRLLQPDFQPICASQLYPRHKHLLIKRSLRCRQCEHNLSKPEFNPTSIKFKIQLVAVNYIPEVRIMSIPNLRYMKESQVLLTLTNPVENLTHVTLLECEEGDPDDTNSTAKVSVPPTELVLAGKDAAAEYDELAEPQDFPDDPDVVAFRKANKVGVFIKVTPQREEGDVTVCFKLKHDFKNLAAPIRPVEEADPGAEVSWLTQHVELSLGPLLP</sequence>
<keyword id="KW-0002">3D-structure</keyword>
<keyword id="KW-0007">Acetylation</keyword>
<keyword id="KW-0175">Coiled coil</keyword>
<keyword id="KW-0963">Cytoplasm</keyword>
<keyword id="KW-0206">Cytoskeleton</keyword>
<keyword id="KW-1017">Isopeptide bond</keyword>
<keyword id="KW-0597">Phosphoprotein</keyword>
<keyword id="KW-1185">Reference proteome</keyword>
<keyword id="KW-0832">Ubl conjugation</keyword>